<dbReference type="EMBL" id="CR382132">
    <property type="protein sequence ID" value="CAG77862.1"/>
    <property type="molecule type" value="Genomic_DNA"/>
</dbReference>
<dbReference type="RefSeq" id="XP_505055.1">
    <property type="nucleotide sequence ID" value="XM_505055.1"/>
</dbReference>
<dbReference type="SMR" id="Q6C2Q7"/>
<dbReference type="FunCoup" id="Q6C2Q7">
    <property type="interactions" value="823"/>
</dbReference>
<dbReference type="STRING" id="284591.Q6C2Q7"/>
<dbReference type="EnsemblFungi" id="CAG77862">
    <property type="protein sequence ID" value="CAG77862"/>
    <property type="gene ID" value="YALI0_F05918g"/>
</dbReference>
<dbReference type="KEGG" id="yli:2908470"/>
<dbReference type="VEuPathDB" id="FungiDB:YALI0_F05918g"/>
<dbReference type="HOGENOM" id="CLU_006468_0_0_1"/>
<dbReference type="InParanoid" id="Q6C2Q7"/>
<dbReference type="OMA" id="NAYAVYT"/>
<dbReference type="OrthoDB" id="97562at4891"/>
<dbReference type="Proteomes" id="UP000001300">
    <property type="component" value="Chromosome F"/>
</dbReference>
<dbReference type="GO" id="GO:0005730">
    <property type="term" value="C:nucleolus"/>
    <property type="evidence" value="ECO:0000318"/>
    <property type="project" value="GO_Central"/>
</dbReference>
<dbReference type="GO" id="GO:0003723">
    <property type="term" value="F:RNA binding"/>
    <property type="evidence" value="ECO:0000318"/>
    <property type="project" value="GO_Central"/>
</dbReference>
<dbReference type="GO" id="GO:0000463">
    <property type="term" value="P:maturation of LSU-rRNA from tricistronic rRNA transcript (SSU-rRNA, 5.8S rRNA, LSU-rRNA)"/>
    <property type="evidence" value="ECO:0000318"/>
    <property type="project" value="GO_Central"/>
</dbReference>
<dbReference type="CDD" id="cd12669">
    <property type="entry name" value="RRM1_Nop12p_like"/>
    <property type="match status" value="1"/>
</dbReference>
<dbReference type="CDD" id="cd12670">
    <property type="entry name" value="RRM2_Nop12p_like"/>
    <property type="match status" value="1"/>
</dbReference>
<dbReference type="Gene3D" id="3.30.70.330">
    <property type="match status" value="2"/>
</dbReference>
<dbReference type="InterPro" id="IPR034777">
    <property type="entry name" value="Nop12_RRM1"/>
</dbReference>
<dbReference type="InterPro" id="IPR012677">
    <property type="entry name" value="Nucleotide-bd_a/b_plait_sf"/>
</dbReference>
<dbReference type="InterPro" id="IPR035979">
    <property type="entry name" value="RBD_domain_sf"/>
</dbReference>
<dbReference type="InterPro" id="IPR047189">
    <property type="entry name" value="RRM2_Nop12p-like"/>
</dbReference>
<dbReference type="InterPro" id="IPR000504">
    <property type="entry name" value="RRM_dom"/>
</dbReference>
<dbReference type="PANTHER" id="PTHR23236">
    <property type="entry name" value="EUKARYOTIC TRANSLATION INITIATION FACTOR 4B/4H"/>
    <property type="match status" value="1"/>
</dbReference>
<dbReference type="PANTHER" id="PTHR23236:SF25">
    <property type="entry name" value="RNA-BINDING PROTEIN 34"/>
    <property type="match status" value="1"/>
</dbReference>
<dbReference type="Pfam" id="PF00076">
    <property type="entry name" value="RRM_1"/>
    <property type="match status" value="1"/>
</dbReference>
<dbReference type="SMART" id="SM00360">
    <property type="entry name" value="RRM"/>
    <property type="match status" value="2"/>
</dbReference>
<dbReference type="SUPFAM" id="SSF54928">
    <property type="entry name" value="RNA-binding domain, RBD"/>
    <property type="match status" value="2"/>
</dbReference>
<dbReference type="PROSITE" id="PS50102">
    <property type="entry name" value="RRM"/>
    <property type="match status" value="2"/>
</dbReference>
<gene>
    <name type="primary">NOP12</name>
    <name type="ordered locus">YALI0F05918g</name>
</gene>
<reference key="1">
    <citation type="journal article" date="2004" name="Nature">
        <title>Genome evolution in yeasts.</title>
        <authorList>
            <person name="Dujon B."/>
            <person name="Sherman D."/>
            <person name="Fischer G."/>
            <person name="Durrens P."/>
            <person name="Casaregola S."/>
            <person name="Lafontaine I."/>
            <person name="de Montigny J."/>
            <person name="Marck C."/>
            <person name="Neuveglise C."/>
            <person name="Talla E."/>
            <person name="Goffard N."/>
            <person name="Frangeul L."/>
            <person name="Aigle M."/>
            <person name="Anthouard V."/>
            <person name="Babour A."/>
            <person name="Barbe V."/>
            <person name="Barnay S."/>
            <person name="Blanchin S."/>
            <person name="Beckerich J.-M."/>
            <person name="Beyne E."/>
            <person name="Bleykasten C."/>
            <person name="Boisrame A."/>
            <person name="Boyer J."/>
            <person name="Cattolico L."/>
            <person name="Confanioleri F."/>
            <person name="de Daruvar A."/>
            <person name="Despons L."/>
            <person name="Fabre E."/>
            <person name="Fairhead C."/>
            <person name="Ferry-Dumazet H."/>
            <person name="Groppi A."/>
            <person name="Hantraye F."/>
            <person name="Hennequin C."/>
            <person name="Jauniaux N."/>
            <person name="Joyet P."/>
            <person name="Kachouri R."/>
            <person name="Kerrest A."/>
            <person name="Koszul R."/>
            <person name="Lemaire M."/>
            <person name="Lesur I."/>
            <person name="Ma L."/>
            <person name="Muller H."/>
            <person name="Nicaud J.-M."/>
            <person name="Nikolski M."/>
            <person name="Oztas S."/>
            <person name="Ozier-Kalogeropoulos O."/>
            <person name="Pellenz S."/>
            <person name="Potier S."/>
            <person name="Richard G.-F."/>
            <person name="Straub M.-L."/>
            <person name="Suleau A."/>
            <person name="Swennen D."/>
            <person name="Tekaia F."/>
            <person name="Wesolowski-Louvel M."/>
            <person name="Westhof E."/>
            <person name="Wirth B."/>
            <person name="Zeniou-Meyer M."/>
            <person name="Zivanovic Y."/>
            <person name="Bolotin-Fukuhara M."/>
            <person name="Thierry A."/>
            <person name="Bouchier C."/>
            <person name="Caudron B."/>
            <person name="Scarpelli C."/>
            <person name="Gaillardin C."/>
            <person name="Weissenbach J."/>
            <person name="Wincker P."/>
            <person name="Souciet J.-L."/>
        </authorList>
    </citation>
    <scope>NUCLEOTIDE SEQUENCE [LARGE SCALE GENOMIC DNA]</scope>
    <source>
        <strain>CLIB 122 / E 150</strain>
    </source>
</reference>
<proteinExistence type="inferred from homology"/>
<organism>
    <name type="scientific">Yarrowia lipolytica (strain CLIB 122 / E 150)</name>
    <name type="common">Yeast</name>
    <name type="synonym">Candida lipolytica</name>
    <dbReference type="NCBI Taxonomy" id="284591"/>
    <lineage>
        <taxon>Eukaryota</taxon>
        <taxon>Fungi</taxon>
        <taxon>Dikarya</taxon>
        <taxon>Ascomycota</taxon>
        <taxon>Saccharomycotina</taxon>
        <taxon>Dipodascomycetes</taxon>
        <taxon>Dipodascales</taxon>
        <taxon>Dipodascales incertae sedis</taxon>
        <taxon>Yarrowia</taxon>
    </lineage>
</organism>
<name>NOP12_YARLI</name>
<feature type="chain" id="PRO_0000081674" description="Nucleolar protein 12">
    <location>
        <begin position="1"/>
        <end position="509"/>
    </location>
</feature>
<feature type="domain" description="RRM 1" evidence="3">
    <location>
        <begin position="168"/>
        <end position="266"/>
    </location>
</feature>
<feature type="domain" description="RRM 2" evidence="3">
    <location>
        <begin position="274"/>
        <end position="359"/>
    </location>
</feature>
<feature type="region of interest" description="Disordered" evidence="4">
    <location>
        <begin position="1"/>
        <end position="152"/>
    </location>
</feature>
<feature type="region of interest" description="Disordered" evidence="4">
    <location>
        <begin position="345"/>
        <end position="403"/>
    </location>
</feature>
<feature type="region of interest" description="Disordered" evidence="4">
    <location>
        <begin position="419"/>
        <end position="509"/>
    </location>
</feature>
<feature type="coiled-coil region" evidence="2">
    <location>
        <begin position="33"/>
        <end position="114"/>
    </location>
</feature>
<feature type="compositionally biased region" description="Basic and acidic residues" evidence="4">
    <location>
        <begin position="28"/>
        <end position="40"/>
    </location>
</feature>
<feature type="compositionally biased region" description="Acidic residues" evidence="4">
    <location>
        <begin position="41"/>
        <end position="85"/>
    </location>
</feature>
<feature type="compositionally biased region" description="Basic and acidic residues" evidence="4">
    <location>
        <begin position="112"/>
        <end position="122"/>
    </location>
</feature>
<feature type="compositionally biased region" description="Acidic residues" evidence="4">
    <location>
        <begin position="136"/>
        <end position="150"/>
    </location>
</feature>
<feature type="compositionally biased region" description="Basic residues" evidence="4">
    <location>
        <begin position="347"/>
        <end position="359"/>
    </location>
</feature>
<feature type="compositionally biased region" description="Basic and acidic residues" evidence="4">
    <location>
        <begin position="361"/>
        <end position="389"/>
    </location>
</feature>
<feature type="compositionally biased region" description="Basic residues" evidence="4">
    <location>
        <begin position="426"/>
        <end position="436"/>
    </location>
</feature>
<feature type="compositionally biased region" description="Basic and acidic residues" evidence="4">
    <location>
        <begin position="437"/>
        <end position="451"/>
    </location>
</feature>
<feature type="compositionally biased region" description="Basic and acidic residues" evidence="4">
    <location>
        <begin position="478"/>
        <end position="503"/>
    </location>
</feature>
<protein>
    <recommendedName>
        <fullName>Nucleolar protein 12</fullName>
    </recommendedName>
</protein>
<keyword id="KW-0175">Coiled coil</keyword>
<keyword id="KW-0539">Nucleus</keyword>
<keyword id="KW-1185">Reference proteome</keyword>
<keyword id="KW-0677">Repeat</keyword>
<keyword id="KW-0690">Ribosome biogenesis</keyword>
<keyword id="KW-0694">RNA-binding</keyword>
<keyword id="KW-0698">rRNA processing</keyword>
<sequence length="509" mass="57053">MTTTKDNSGLAALFANSSGPRQKPQRAGKVDPVRDQQEDKMEVEDEEEDEEEDEEDEEEDEEDEEDEEEKEEDDDDDDDEEEIEEPVIKKSKKNKKSKEESADLEDQYMAKLAEEVAEEKPMVAETSAEEIKVDEPESDSEDEPELDVDEETKKKLEATNKELDKADYTIFVGNVSSEVITDKTVYNNFKALFAAIGTVASVRFRSISFSKLLPRKVAFISQQFHSKRDTVNAYIVFKNVKSVKGALTLNGSVFKGFHMRVDSVAHPGAQDHKRCVFVGALDFEEQEESLWEAFSSCGDVEYVRIVRDPKTNVGKGFAYVQFKDVNSVEQALLLNGKGINELSKSTTNKRKLRVSRAKSQHSQERAKQADMKNIRNAKTEGLSRDEKSHFGRAQSRLGKAGKAQLQSIVQEGLRAKKEDGKVNLARSKRRGVKPNKNRVEKPGQSRAEKRKAMFGTPTNGAPGAGGKKKRLTTRSQKFKQDGGVKKDGDAKKDGPKKERDGSKKGSKKN</sequence>
<accession>Q6C2Q7</accession>
<comment type="function">
    <text evidence="1">Involved in pre-25S rRNA processing.</text>
</comment>
<comment type="subcellular location">
    <subcellularLocation>
        <location evidence="1">Nucleus</location>
        <location evidence="1">Nucleolus</location>
    </subcellularLocation>
</comment>
<comment type="similarity">
    <text evidence="5">Belongs to the RRM RBM34 family.</text>
</comment>
<evidence type="ECO:0000250" key="1"/>
<evidence type="ECO:0000255" key="2"/>
<evidence type="ECO:0000255" key="3">
    <source>
        <dbReference type="PROSITE-ProRule" id="PRU00176"/>
    </source>
</evidence>
<evidence type="ECO:0000256" key="4">
    <source>
        <dbReference type="SAM" id="MobiDB-lite"/>
    </source>
</evidence>
<evidence type="ECO:0000305" key="5"/>